<organism>
    <name type="scientific">Macaca assamensis</name>
    <name type="common">Assam macaque</name>
    <name type="synonym">Assamese macaque</name>
    <dbReference type="NCBI Taxonomy" id="9551"/>
    <lineage>
        <taxon>Eukaryota</taxon>
        <taxon>Metazoa</taxon>
        <taxon>Chordata</taxon>
        <taxon>Craniata</taxon>
        <taxon>Vertebrata</taxon>
        <taxon>Euteleostomi</taxon>
        <taxon>Mammalia</taxon>
        <taxon>Eutheria</taxon>
        <taxon>Euarchontoglires</taxon>
        <taxon>Primates</taxon>
        <taxon>Haplorrhini</taxon>
        <taxon>Catarrhini</taxon>
        <taxon>Cercopithecidae</taxon>
        <taxon>Cercopithecinae</taxon>
        <taxon>Macaca</taxon>
    </lineage>
</organism>
<reference key="1">
    <citation type="submission" date="2003-06" db="EMBL/GenBank/DDBJ databases">
        <title>LOC122650 on chromosome 14q11.2 is related to the RNase A superfamily and contains a unique amino-terminal pre-protein-like domain.</title>
        <authorList>
            <person name="Devor E.J."/>
            <person name="Moffat-Wilson K.A."/>
        </authorList>
    </citation>
    <scope>NUCLEOTIDE SEQUENCE [GENOMIC DNA]</scope>
</reference>
<name>RNAS9_MACAS</name>
<evidence type="ECO:0000250" key="1"/>
<evidence type="ECO:0000255" key="2"/>
<evidence type="ECO:0000305" key="3"/>
<protein>
    <recommendedName>
        <fullName>Inactive ribonuclease-like protein 9</fullName>
    </recommendedName>
</protein>
<dbReference type="EMBL" id="AY263973">
    <property type="protein sequence ID" value="AAP21772.2"/>
    <property type="molecule type" value="Genomic_DNA"/>
</dbReference>
<dbReference type="SMR" id="Q863J7"/>
<dbReference type="GlyCosmos" id="Q863J7">
    <property type="glycosylation" value="2 sites, No reported glycans"/>
</dbReference>
<dbReference type="GO" id="GO:0005576">
    <property type="term" value="C:extracellular region"/>
    <property type="evidence" value="ECO:0007669"/>
    <property type="project" value="UniProtKB-SubCell"/>
</dbReference>
<dbReference type="GO" id="GO:0003676">
    <property type="term" value="F:nucleic acid binding"/>
    <property type="evidence" value="ECO:0007669"/>
    <property type="project" value="InterPro"/>
</dbReference>
<dbReference type="GO" id="GO:0050830">
    <property type="term" value="P:defense response to Gram-positive bacterium"/>
    <property type="evidence" value="ECO:0007669"/>
    <property type="project" value="TreeGrafter"/>
</dbReference>
<dbReference type="CDD" id="cd00163">
    <property type="entry name" value="RNase_A"/>
    <property type="match status" value="1"/>
</dbReference>
<dbReference type="FunFam" id="3.10.130.10:FF:000003">
    <property type="entry name" value="Inactive ribonuclease-like protein 9"/>
    <property type="match status" value="1"/>
</dbReference>
<dbReference type="Gene3D" id="3.10.130.10">
    <property type="entry name" value="Ribonuclease A-like domain"/>
    <property type="match status" value="1"/>
</dbReference>
<dbReference type="InterPro" id="IPR001427">
    <property type="entry name" value="RNaseA"/>
</dbReference>
<dbReference type="InterPro" id="IPR036816">
    <property type="entry name" value="RNaseA-like_dom_sf"/>
</dbReference>
<dbReference type="InterPro" id="IPR023412">
    <property type="entry name" value="RNaseA_domain"/>
</dbReference>
<dbReference type="PANTHER" id="PTHR11437:SF14">
    <property type="entry name" value="INACTIVE RIBONUCLEASE-LIKE PROTEIN 9"/>
    <property type="match status" value="1"/>
</dbReference>
<dbReference type="PANTHER" id="PTHR11437">
    <property type="entry name" value="RIBONUCLEASE"/>
    <property type="match status" value="1"/>
</dbReference>
<dbReference type="Pfam" id="PF00074">
    <property type="entry name" value="RnaseA"/>
    <property type="match status" value="1"/>
</dbReference>
<dbReference type="SMART" id="SM00092">
    <property type="entry name" value="RNAse_Pc"/>
    <property type="match status" value="1"/>
</dbReference>
<dbReference type="SUPFAM" id="SSF54076">
    <property type="entry name" value="RNase A-like"/>
    <property type="match status" value="1"/>
</dbReference>
<sequence>MRTPITTHSLLLLLLLQQLLQPVQLQEVDTDFDSPDDEMEELEEYLEEFQSTGPTRPPTKENVERRVIIEPGMPLYDRDYCNEEIKRKNVYHKYRCVTEHYFLLMQYDELQKICYNRFVPCKNGVRKCNRSKGLVEGVYCNLTEAFEIPRCKYKSFYRRGYVLITCAWQNEIHKLIPHTINDLVEPPKHRSFLNEDGVFVIPP</sequence>
<accession>Q863J7</accession>
<proteinExistence type="inferred from homology"/>
<comment type="function">
    <text evidence="1">Does not exhibit any ribonuclease activity.</text>
</comment>
<comment type="subcellular location">
    <subcellularLocation>
        <location evidence="3">Secreted</location>
    </subcellularLocation>
</comment>
<comment type="similarity">
    <text evidence="3">Belongs to the pancreatic ribonuclease family.</text>
</comment>
<keyword id="KW-1015">Disulfide bond</keyword>
<keyword id="KW-0325">Glycoprotein</keyword>
<keyword id="KW-0964">Secreted</keyword>
<keyword id="KW-0732">Signal</keyword>
<gene>
    <name type="primary">RNASE9</name>
</gene>
<feature type="signal peptide" evidence="2">
    <location>
        <begin position="1"/>
        <end position="25"/>
    </location>
</feature>
<feature type="chain" id="PRO_0000030953" description="Inactive ribonuclease-like protein 9">
    <location>
        <begin position="26"/>
        <end position="203"/>
    </location>
</feature>
<feature type="glycosylation site" description="N-linked (GlcNAc...) asparagine" evidence="2">
    <location>
        <position position="129"/>
    </location>
</feature>
<feature type="glycosylation site" description="N-linked (GlcNAc...) asparagine" evidence="2">
    <location>
        <position position="141"/>
    </location>
</feature>
<feature type="disulfide bond" evidence="1">
    <location>
        <begin position="96"/>
        <end position="151"/>
    </location>
</feature>
<feature type="disulfide bond" evidence="1">
    <location>
        <begin position="114"/>
        <end position="166"/>
    </location>
</feature>
<feature type="disulfide bond" evidence="1">
    <location>
        <begin position="121"/>
        <end position="128"/>
    </location>
</feature>